<dbReference type="EMBL" id="U18421">
    <property type="protein sequence ID" value="AAA87719.1"/>
    <property type="molecule type" value="Genomic_DNA"/>
</dbReference>
<dbReference type="EMBL" id="AF015775">
    <property type="protein sequence ID" value="AAB72077.1"/>
    <property type="molecule type" value="Genomic_DNA"/>
</dbReference>
<dbReference type="EMBL" id="AF006665">
    <property type="protein sequence ID" value="AAB81151.1"/>
    <property type="molecule type" value="Genomic_DNA"/>
</dbReference>
<dbReference type="EMBL" id="AL009126">
    <property type="protein sequence ID" value="CAB13868.1"/>
    <property type="molecule type" value="Genomic_DNA"/>
</dbReference>
<dbReference type="PIR" id="B69598">
    <property type="entry name" value="B69598"/>
</dbReference>
<dbReference type="RefSeq" id="NP_389858.1">
    <property type="nucleotide sequence ID" value="NC_000964.3"/>
</dbReference>
<dbReference type="RefSeq" id="WP_003230826.1">
    <property type="nucleotide sequence ID" value="NZ_OZ025638.1"/>
</dbReference>
<dbReference type="FunCoup" id="P42091">
    <property type="interactions" value="92"/>
</dbReference>
<dbReference type="IntAct" id="P42091">
    <property type="interactions" value="1"/>
</dbReference>
<dbReference type="STRING" id="224308.BSU19770"/>
<dbReference type="PaxDb" id="224308-BSU19770"/>
<dbReference type="EnsemblBacteria" id="CAB13868">
    <property type="protein sequence ID" value="CAB13868"/>
    <property type="gene ID" value="BSU_19770"/>
</dbReference>
<dbReference type="GeneID" id="940074"/>
<dbReference type="KEGG" id="bsu:BSU19770"/>
<dbReference type="PATRIC" id="fig|224308.179.peg.2166"/>
<dbReference type="eggNOG" id="ENOG5030CVA">
    <property type="taxonomic scope" value="Bacteria"/>
</dbReference>
<dbReference type="InParanoid" id="P42091"/>
<dbReference type="OrthoDB" id="2922309at2"/>
<dbReference type="BioCyc" id="BSUB:BSU19770-MONOMER"/>
<dbReference type="Proteomes" id="UP000001570">
    <property type="component" value="Chromosome"/>
</dbReference>
<dbReference type="InterPro" id="IPR048203">
    <property type="entry name" value="CgeC-like"/>
</dbReference>
<dbReference type="NCBIfam" id="NF041485">
    <property type="entry name" value="spor_mat_CgeC"/>
    <property type="match status" value="1"/>
</dbReference>
<organism>
    <name type="scientific">Bacillus subtilis (strain 168)</name>
    <dbReference type="NCBI Taxonomy" id="224308"/>
    <lineage>
        <taxon>Bacteria</taxon>
        <taxon>Bacillati</taxon>
        <taxon>Bacillota</taxon>
        <taxon>Bacilli</taxon>
        <taxon>Bacillales</taxon>
        <taxon>Bacillaceae</taxon>
        <taxon>Bacillus</taxon>
    </lineage>
</organism>
<comment type="function">
    <text>May be involved in maturation of the outermost layer of the spore.</text>
</comment>
<accession>P42091</accession>
<keyword id="KW-1185">Reference proteome</keyword>
<name>CGEC_BACSU</name>
<gene>
    <name type="primary">cgeC</name>
    <name type="synonym">cgeBA</name>
    <name type="ordered locus">BSU19770</name>
</gene>
<protein>
    <recommendedName>
        <fullName>Protein CgeC</fullName>
    </recommendedName>
</protein>
<sequence length="101" mass="11382">MDLEKQVDREENQDDLHFILLLLILLIRQSSSEGNPSDLRRQLVFAKELGVPVSKVNLINGDTLQNVIVKEVLTDLVIFQNPLNNTRSHVSLSSVVSWGAF</sequence>
<feature type="chain" id="PRO_0000089597" description="Protein CgeC">
    <location>
        <begin position="1"/>
        <end position="101"/>
    </location>
</feature>
<reference key="1">
    <citation type="journal article" date="1995" name="J. Bacteriol.">
        <title>Adjacent and divergently oriented operons under the control of the sporulation regulatory protein GerE in Bacillus subtilis.</title>
        <authorList>
            <person name="Roels S."/>
            <person name="Losick R."/>
        </authorList>
    </citation>
    <scope>NUCLEOTIDE SEQUENCE [GENOMIC DNA]</scope>
    <source>
        <strain>168</strain>
    </source>
</reference>
<reference key="2">
    <citation type="journal article" date="1998" name="DNA Res.">
        <title>Sequence analysis of the Bacillus subtilis 168 chromosome region between the sspC and odhA loci (184 degrees-180 degrees).</title>
        <authorList>
            <person name="Ghim S.-Y."/>
            <person name="Choi S.-K."/>
            <person name="Shin B.-S."/>
            <person name="Jeong Y.-M."/>
            <person name="Sorokin A."/>
            <person name="Ehrlich S.D."/>
            <person name="Park S.-H."/>
        </authorList>
    </citation>
    <scope>NUCLEOTIDE SEQUENCE [GENOMIC DNA]</scope>
    <source>
        <strain>168</strain>
    </source>
</reference>
<reference key="3">
    <citation type="journal article" date="1997" name="Nature">
        <title>The complete genome sequence of the Gram-positive bacterium Bacillus subtilis.</title>
        <authorList>
            <person name="Kunst F."/>
            <person name="Ogasawara N."/>
            <person name="Moszer I."/>
            <person name="Albertini A.M."/>
            <person name="Alloni G."/>
            <person name="Azevedo V."/>
            <person name="Bertero M.G."/>
            <person name="Bessieres P."/>
            <person name="Bolotin A."/>
            <person name="Borchert S."/>
            <person name="Borriss R."/>
            <person name="Boursier L."/>
            <person name="Brans A."/>
            <person name="Braun M."/>
            <person name="Brignell S.C."/>
            <person name="Bron S."/>
            <person name="Brouillet S."/>
            <person name="Bruschi C.V."/>
            <person name="Caldwell B."/>
            <person name="Capuano V."/>
            <person name="Carter N.M."/>
            <person name="Choi S.-K."/>
            <person name="Codani J.-J."/>
            <person name="Connerton I.F."/>
            <person name="Cummings N.J."/>
            <person name="Daniel R.A."/>
            <person name="Denizot F."/>
            <person name="Devine K.M."/>
            <person name="Duesterhoeft A."/>
            <person name="Ehrlich S.D."/>
            <person name="Emmerson P.T."/>
            <person name="Entian K.-D."/>
            <person name="Errington J."/>
            <person name="Fabret C."/>
            <person name="Ferrari E."/>
            <person name="Foulger D."/>
            <person name="Fritz C."/>
            <person name="Fujita M."/>
            <person name="Fujita Y."/>
            <person name="Fuma S."/>
            <person name="Galizzi A."/>
            <person name="Galleron N."/>
            <person name="Ghim S.-Y."/>
            <person name="Glaser P."/>
            <person name="Goffeau A."/>
            <person name="Golightly E.J."/>
            <person name="Grandi G."/>
            <person name="Guiseppi G."/>
            <person name="Guy B.J."/>
            <person name="Haga K."/>
            <person name="Haiech J."/>
            <person name="Harwood C.R."/>
            <person name="Henaut A."/>
            <person name="Hilbert H."/>
            <person name="Holsappel S."/>
            <person name="Hosono S."/>
            <person name="Hullo M.-F."/>
            <person name="Itaya M."/>
            <person name="Jones L.-M."/>
            <person name="Joris B."/>
            <person name="Karamata D."/>
            <person name="Kasahara Y."/>
            <person name="Klaerr-Blanchard M."/>
            <person name="Klein C."/>
            <person name="Kobayashi Y."/>
            <person name="Koetter P."/>
            <person name="Koningstein G."/>
            <person name="Krogh S."/>
            <person name="Kumano M."/>
            <person name="Kurita K."/>
            <person name="Lapidus A."/>
            <person name="Lardinois S."/>
            <person name="Lauber J."/>
            <person name="Lazarevic V."/>
            <person name="Lee S.-M."/>
            <person name="Levine A."/>
            <person name="Liu H."/>
            <person name="Masuda S."/>
            <person name="Mauel C."/>
            <person name="Medigue C."/>
            <person name="Medina N."/>
            <person name="Mellado R.P."/>
            <person name="Mizuno M."/>
            <person name="Moestl D."/>
            <person name="Nakai S."/>
            <person name="Noback M."/>
            <person name="Noone D."/>
            <person name="O'Reilly M."/>
            <person name="Ogawa K."/>
            <person name="Ogiwara A."/>
            <person name="Oudega B."/>
            <person name="Park S.-H."/>
            <person name="Parro V."/>
            <person name="Pohl T.M."/>
            <person name="Portetelle D."/>
            <person name="Porwollik S."/>
            <person name="Prescott A.M."/>
            <person name="Presecan E."/>
            <person name="Pujic P."/>
            <person name="Purnelle B."/>
            <person name="Rapoport G."/>
            <person name="Rey M."/>
            <person name="Reynolds S."/>
            <person name="Rieger M."/>
            <person name="Rivolta C."/>
            <person name="Rocha E."/>
            <person name="Roche B."/>
            <person name="Rose M."/>
            <person name="Sadaie Y."/>
            <person name="Sato T."/>
            <person name="Scanlan E."/>
            <person name="Schleich S."/>
            <person name="Schroeter R."/>
            <person name="Scoffone F."/>
            <person name="Sekiguchi J."/>
            <person name="Sekowska A."/>
            <person name="Seror S.J."/>
            <person name="Serror P."/>
            <person name="Shin B.-S."/>
            <person name="Soldo B."/>
            <person name="Sorokin A."/>
            <person name="Tacconi E."/>
            <person name="Takagi T."/>
            <person name="Takahashi H."/>
            <person name="Takemaru K."/>
            <person name="Takeuchi M."/>
            <person name="Tamakoshi A."/>
            <person name="Tanaka T."/>
            <person name="Terpstra P."/>
            <person name="Tognoni A."/>
            <person name="Tosato V."/>
            <person name="Uchiyama S."/>
            <person name="Vandenbol M."/>
            <person name="Vannier F."/>
            <person name="Vassarotti A."/>
            <person name="Viari A."/>
            <person name="Wambutt R."/>
            <person name="Wedler E."/>
            <person name="Wedler H."/>
            <person name="Weitzenegger T."/>
            <person name="Winters P."/>
            <person name="Wipat A."/>
            <person name="Yamamoto H."/>
            <person name="Yamane K."/>
            <person name="Yasumoto K."/>
            <person name="Yata K."/>
            <person name="Yoshida K."/>
            <person name="Yoshikawa H.-F."/>
            <person name="Zumstein E."/>
            <person name="Yoshikawa H."/>
            <person name="Danchin A."/>
        </authorList>
    </citation>
    <scope>NUCLEOTIDE SEQUENCE [LARGE SCALE GENOMIC DNA]</scope>
    <source>
        <strain>168</strain>
    </source>
</reference>
<proteinExistence type="predicted"/>